<proteinExistence type="inferred from homology"/>
<evidence type="ECO:0000255" key="1">
    <source>
        <dbReference type="HAMAP-Rule" id="MF_01396"/>
    </source>
</evidence>
<dbReference type="EMBL" id="CP001283">
    <property type="protein sequence ID" value="ACK90592.1"/>
    <property type="molecule type" value="Genomic_DNA"/>
</dbReference>
<dbReference type="RefSeq" id="WP_000052064.1">
    <property type="nucleotide sequence ID" value="NC_011773.1"/>
</dbReference>
<dbReference type="SMR" id="B7JGN5"/>
<dbReference type="GeneID" id="93005813"/>
<dbReference type="KEGG" id="bcu:BCAH820_5401"/>
<dbReference type="HOGENOM" id="CLU_148047_1_1_9"/>
<dbReference type="Proteomes" id="UP000001363">
    <property type="component" value="Chromosome"/>
</dbReference>
<dbReference type="GO" id="GO:0005886">
    <property type="term" value="C:plasma membrane"/>
    <property type="evidence" value="ECO:0007669"/>
    <property type="project" value="UniProtKB-SubCell"/>
</dbReference>
<dbReference type="GO" id="GO:0045259">
    <property type="term" value="C:proton-transporting ATP synthase complex"/>
    <property type="evidence" value="ECO:0007669"/>
    <property type="project" value="UniProtKB-KW"/>
</dbReference>
<dbReference type="GO" id="GO:0033177">
    <property type="term" value="C:proton-transporting two-sector ATPase complex, proton-transporting domain"/>
    <property type="evidence" value="ECO:0007669"/>
    <property type="project" value="InterPro"/>
</dbReference>
<dbReference type="GO" id="GO:0008289">
    <property type="term" value="F:lipid binding"/>
    <property type="evidence" value="ECO:0007669"/>
    <property type="project" value="UniProtKB-KW"/>
</dbReference>
<dbReference type="GO" id="GO:0046933">
    <property type="term" value="F:proton-transporting ATP synthase activity, rotational mechanism"/>
    <property type="evidence" value="ECO:0007669"/>
    <property type="project" value="UniProtKB-UniRule"/>
</dbReference>
<dbReference type="CDD" id="cd18185">
    <property type="entry name" value="ATP-synt_Fo_c_ATPE"/>
    <property type="match status" value="1"/>
</dbReference>
<dbReference type="FunFam" id="1.20.20.10:FF:000004">
    <property type="entry name" value="ATP synthase subunit c"/>
    <property type="match status" value="1"/>
</dbReference>
<dbReference type="Gene3D" id="1.20.20.10">
    <property type="entry name" value="F1F0 ATP synthase subunit C"/>
    <property type="match status" value="1"/>
</dbReference>
<dbReference type="HAMAP" id="MF_01396">
    <property type="entry name" value="ATP_synth_c_bact"/>
    <property type="match status" value="1"/>
</dbReference>
<dbReference type="InterPro" id="IPR005953">
    <property type="entry name" value="ATP_synth_csu_bac/chlpt"/>
</dbReference>
<dbReference type="InterPro" id="IPR000454">
    <property type="entry name" value="ATP_synth_F0_csu"/>
</dbReference>
<dbReference type="InterPro" id="IPR020537">
    <property type="entry name" value="ATP_synth_F0_csu_DDCD_BS"/>
</dbReference>
<dbReference type="InterPro" id="IPR038662">
    <property type="entry name" value="ATP_synth_F0_csu_sf"/>
</dbReference>
<dbReference type="InterPro" id="IPR002379">
    <property type="entry name" value="ATPase_proteolipid_c-like_dom"/>
</dbReference>
<dbReference type="InterPro" id="IPR035921">
    <property type="entry name" value="F/V-ATP_Csub_sf"/>
</dbReference>
<dbReference type="NCBIfam" id="TIGR01260">
    <property type="entry name" value="ATP_synt_c"/>
    <property type="match status" value="1"/>
</dbReference>
<dbReference type="NCBIfam" id="NF005363">
    <property type="entry name" value="PRK06876.1"/>
    <property type="match status" value="1"/>
</dbReference>
<dbReference type="PANTHER" id="PTHR10031">
    <property type="entry name" value="ATP SYNTHASE LIPID-BINDING PROTEIN, MITOCHONDRIAL"/>
    <property type="match status" value="1"/>
</dbReference>
<dbReference type="PANTHER" id="PTHR10031:SF0">
    <property type="entry name" value="ATPASE PROTEIN 9"/>
    <property type="match status" value="1"/>
</dbReference>
<dbReference type="Pfam" id="PF00137">
    <property type="entry name" value="ATP-synt_C"/>
    <property type="match status" value="1"/>
</dbReference>
<dbReference type="PRINTS" id="PR00124">
    <property type="entry name" value="ATPASEC"/>
</dbReference>
<dbReference type="SUPFAM" id="SSF81333">
    <property type="entry name" value="F1F0 ATP synthase subunit C"/>
    <property type="match status" value="1"/>
</dbReference>
<dbReference type="PROSITE" id="PS00605">
    <property type="entry name" value="ATPASE_C"/>
    <property type="match status" value="1"/>
</dbReference>
<sequence>MSLGVIAAAIAIGLSALGAGIGNGLIVSRTIEGVARQPELKGALQTIMFIGVALVEALPIIGVVIAFIVMNK</sequence>
<reference key="1">
    <citation type="submission" date="2008-10" db="EMBL/GenBank/DDBJ databases">
        <title>Genome sequence of Bacillus cereus AH820.</title>
        <authorList>
            <person name="Dodson R.J."/>
            <person name="Durkin A.S."/>
            <person name="Rosovitz M.J."/>
            <person name="Rasko D.A."/>
            <person name="Hoffmaster A."/>
            <person name="Ravel J."/>
            <person name="Sutton G."/>
        </authorList>
    </citation>
    <scope>NUCLEOTIDE SEQUENCE [LARGE SCALE GENOMIC DNA]</scope>
    <source>
        <strain>AH820</strain>
    </source>
</reference>
<name>ATPL_BACC0</name>
<gene>
    <name evidence="1" type="primary">atpE</name>
    <name type="ordered locus">BCAH820_5401</name>
</gene>
<feature type="chain" id="PRO_1000184325" description="ATP synthase subunit c">
    <location>
        <begin position="1"/>
        <end position="72"/>
    </location>
</feature>
<feature type="transmembrane region" description="Helical" evidence="1">
    <location>
        <begin position="1"/>
        <end position="21"/>
    </location>
</feature>
<feature type="transmembrane region" description="Helical" evidence="1">
    <location>
        <begin position="49"/>
        <end position="69"/>
    </location>
</feature>
<feature type="site" description="Reversibly protonated during proton transport" evidence="1">
    <location>
        <position position="56"/>
    </location>
</feature>
<organism>
    <name type="scientific">Bacillus cereus (strain AH820)</name>
    <dbReference type="NCBI Taxonomy" id="405535"/>
    <lineage>
        <taxon>Bacteria</taxon>
        <taxon>Bacillati</taxon>
        <taxon>Bacillota</taxon>
        <taxon>Bacilli</taxon>
        <taxon>Bacillales</taxon>
        <taxon>Bacillaceae</taxon>
        <taxon>Bacillus</taxon>
        <taxon>Bacillus cereus group</taxon>
    </lineage>
</organism>
<accession>B7JGN5</accession>
<protein>
    <recommendedName>
        <fullName evidence="1">ATP synthase subunit c</fullName>
    </recommendedName>
    <alternativeName>
        <fullName evidence="1">ATP synthase F(0) sector subunit c</fullName>
    </alternativeName>
    <alternativeName>
        <fullName evidence="1">F-type ATPase subunit c</fullName>
        <shortName evidence="1">F-ATPase subunit c</shortName>
    </alternativeName>
    <alternativeName>
        <fullName evidence="1">Lipid-binding protein</fullName>
    </alternativeName>
</protein>
<comment type="function">
    <text evidence="1">F(1)F(0) ATP synthase produces ATP from ADP in the presence of a proton or sodium gradient. F-type ATPases consist of two structural domains, F(1) containing the extramembraneous catalytic core and F(0) containing the membrane proton channel, linked together by a central stalk and a peripheral stalk. During catalysis, ATP synthesis in the catalytic domain of F(1) is coupled via a rotary mechanism of the central stalk subunits to proton translocation.</text>
</comment>
<comment type="function">
    <text evidence="1">Key component of the F(0) channel; it plays a direct role in translocation across the membrane. A homomeric c-ring of between 10-14 subunits forms the central stalk rotor element with the F(1) delta and epsilon subunits.</text>
</comment>
<comment type="subunit">
    <text evidence="1">F-type ATPases have 2 components, F(1) - the catalytic core - and F(0) - the membrane proton channel. F(1) has five subunits: alpha(3), beta(3), gamma(1), delta(1), epsilon(1). F(0) has three main subunits: a(1), b(2) and c(10-14). The alpha and beta chains form an alternating ring which encloses part of the gamma chain. F(1) is attached to F(0) by a central stalk formed by the gamma and epsilon chains, while a peripheral stalk is formed by the delta and b chains.</text>
</comment>
<comment type="subcellular location">
    <subcellularLocation>
        <location evidence="1">Cell membrane</location>
        <topology evidence="1">Multi-pass membrane protein</topology>
    </subcellularLocation>
</comment>
<comment type="similarity">
    <text evidence="1">Belongs to the ATPase C chain family.</text>
</comment>
<keyword id="KW-0066">ATP synthesis</keyword>
<keyword id="KW-1003">Cell membrane</keyword>
<keyword id="KW-0138">CF(0)</keyword>
<keyword id="KW-0375">Hydrogen ion transport</keyword>
<keyword id="KW-0406">Ion transport</keyword>
<keyword id="KW-0446">Lipid-binding</keyword>
<keyword id="KW-0472">Membrane</keyword>
<keyword id="KW-0812">Transmembrane</keyword>
<keyword id="KW-1133">Transmembrane helix</keyword>
<keyword id="KW-0813">Transport</keyword>